<evidence type="ECO:0000255" key="1"/>
<evidence type="ECO:0000255" key="2">
    <source>
        <dbReference type="PROSITE-ProRule" id="PRU00498"/>
    </source>
</evidence>
<evidence type="ECO:0000256" key="3">
    <source>
        <dbReference type="SAM" id="MobiDB-lite"/>
    </source>
</evidence>
<evidence type="ECO:0000269" key="4">
    <source>
    </source>
</evidence>
<evidence type="ECO:0000303" key="5">
    <source>
    </source>
</evidence>
<evidence type="ECO:0000305" key="6"/>
<reference key="1">
    <citation type="journal article" date="2019" name="Chem. Sci.">
        <title>Structure revision of cryptosporioptides and determination of the genetic basis for dimeric xanthone biosynthesis in fungi.</title>
        <authorList>
            <person name="Greco C."/>
            <person name="de Mattos-Shipley K."/>
            <person name="Bailey A.M."/>
            <person name="Mulholland N.P."/>
            <person name="Vincent J.L."/>
            <person name="Willis C.L."/>
            <person name="Cox R.J."/>
            <person name="Simpson T.J."/>
        </authorList>
    </citation>
    <scope>NUCLEOTIDE SEQUENCE [GENOMIC DNA]</scope>
    <scope>FUNCTION</scope>
    <source>
        <strain>8999</strain>
    </source>
</reference>
<sequence>MSSERPDGSAVGDAVPKDTAVGGATDSSRTSNDASQTSQDTAVQETPPKEAPAKEAPAKPASELTQSKWKIALLLGLILMSMFLVALDRSILATAIPRITDEFDSAGDIGWYGSAYLLTCCSFQLLYGKVYTFFDIKTVFVANLLLFEVASAICGAAPSSTVLIVGRALAGIGAAGIFAGTIIAMVFLIPLRHRPKIQGLFGAVFGITSISGPLIGGGFTTNVTWRWCFYINLPIGGVALIAIALWMEVPNKPTANLPLAEKIRGLDLLGTAVFIPCIICLLLALQWGGTTYAWSSGRIIALLVVFSVTFVVYAALQAFRPKTSTIPPLYFLPLWFQTVKGVSAAESGVHLLPVMISMIVGSVTGGFFNAKVGYYSPLAVTGSTIMTIGAALIYTFKVDTSTGRWIGSLILYGIGLGWSFQAPNLAVQTSLAKKDVPSALALIMFVGLLAQAVFVSVGDNVFDTQAARNLSWIPGFTASELTSSGAVSFLTALSPSQRVEAIEDYNSALRKVFMIGLVLCAVCVPGLASMEWKSVKSRGSWDEKPAAKPTDKPTEEKKVPPEAV</sequence>
<comment type="function">
    <text evidence="4">MFS-type transporter; part of the gene cluster that mediates the biosynthesis of the dimeric xanthones cryptosporioptides.</text>
</comment>
<comment type="subcellular location">
    <subcellularLocation>
        <location evidence="1">Membrane</location>
        <topology evidence="1">Multi-pass membrane protein</topology>
    </subcellularLocation>
</comment>
<comment type="similarity">
    <text evidence="6">Belongs to the major facilitator superfamily. TCR/Tet family.</text>
</comment>
<name>DMXR4_CRYX8</name>
<organism>
    <name type="scientific">Cryptosporiopsis sp. (strain 8999)</name>
    <dbReference type="NCBI Taxonomy" id="2572248"/>
    <lineage>
        <taxon>Eukaryota</taxon>
        <taxon>Fungi</taxon>
        <taxon>Dikarya</taxon>
        <taxon>Ascomycota</taxon>
        <taxon>Pezizomycotina</taxon>
        <taxon>Leotiomycetes</taxon>
        <taxon>Helotiales</taxon>
        <taxon>Dermateaceae</taxon>
        <taxon>Cryptosporiopsis</taxon>
    </lineage>
</organism>
<protein>
    <recommendedName>
        <fullName evidence="5">MFS-type transporter dmxR4</fullName>
    </recommendedName>
    <alternativeName>
        <fullName evidence="5">Dimeric xanthone biosynthesis cluster protein R4</fullName>
    </alternativeName>
</protein>
<proteinExistence type="inferred from homology"/>
<dbReference type="EMBL" id="MK182094">
    <property type="protein sequence ID" value="QCL09095.1"/>
    <property type="molecule type" value="Genomic_DNA"/>
</dbReference>
<dbReference type="SMR" id="A0A4P8DK16"/>
<dbReference type="GlyCosmos" id="A0A4P8DK16">
    <property type="glycosylation" value="2 sites, No reported glycans"/>
</dbReference>
<dbReference type="GO" id="GO:0005886">
    <property type="term" value="C:plasma membrane"/>
    <property type="evidence" value="ECO:0007669"/>
    <property type="project" value="TreeGrafter"/>
</dbReference>
<dbReference type="GO" id="GO:0022857">
    <property type="term" value="F:transmembrane transporter activity"/>
    <property type="evidence" value="ECO:0007669"/>
    <property type="project" value="InterPro"/>
</dbReference>
<dbReference type="CDD" id="cd17502">
    <property type="entry name" value="MFS_Azr1_MDR_like"/>
    <property type="match status" value="1"/>
</dbReference>
<dbReference type="FunFam" id="1.20.1250.20:FF:000196">
    <property type="entry name" value="MFS toxin efflux pump (AflT)"/>
    <property type="match status" value="1"/>
</dbReference>
<dbReference type="FunFam" id="1.20.1720.10:FF:000012">
    <property type="entry name" value="MFS toxin efflux pump (AflT)"/>
    <property type="match status" value="1"/>
</dbReference>
<dbReference type="Gene3D" id="1.20.1250.20">
    <property type="entry name" value="MFS general substrate transporter like domains"/>
    <property type="match status" value="1"/>
</dbReference>
<dbReference type="InterPro" id="IPR011701">
    <property type="entry name" value="MFS"/>
</dbReference>
<dbReference type="InterPro" id="IPR020846">
    <property type="entry name" value="MFS_dom"/>
</dbReference>
<dbReference type="InterPro" id="IPR036259">
    <property type="entry name" value="MFS_trans_sf"/>
</dbReference>
<dbReference type="PANTHER" id="PTHR23501:SF153">
    <property type="entry name" value="AFLATOXIN EFFLUX PUMP, PUTATIVE-RELATED"/>
    <property type="match status" value="1"/>
</dbReference>
<dbReference type="PANTHER" id="PTHR23501">
    <property type="entry name" value="MAJOR FACILITATOR SUPERFAMILY"/>
    <property type="match status" value="1"/>
</dbReference>
<dbReference type="Pfam" id="PF07690">
    <property type="entry name" value="MFS_1"/>
    <property type="match status" value="1"/>
</dbReference>
<dbReference type="SUPFAM" id="SSF103473">
    <property type="entry name" value="MFS general substrate transporter"/>
    <property type="match status" value="1"/>
</dbReference>
<dbReference type="PROSITE" id="PS50850">
    <property type="entry name" value="MFS"/>
    <property type="match status" value="1"/>
</dbReference>
<keyword id="KW-0325">Glycoprotein</keyword>
<keyword id="KW-0472">Membrane</keyword>
<keyword id="KW-0812">Transmembrane</keyword>
<keyword id="KW-1133">Transmembrane helix</keyword>
<keyword id="KW-0813">Transport</keyword>
<accession>A0A4P8DK16</accession>
<feature type="chain" id="PRO_0000453500" description="MFS-type transporter dmxR4">
    <location>
        <begin position="1"/>
        <end position="564"/>
    </location>
</feature>
<feature type="transmembrane region" description="Helical" evidence="1">
    <location>
        <begin position="71"/>
        <end position="91"/>
    </location>
</feature>
<feature type="transmembrane region" description="Helical" evidence="1">
    <location>
        <begin position="106"/>
        <end position="126"/>
    </location>
</feature>
<feature type="transmembrane region" description="Helical" evidence="1">
    <location>
        <begin position="138"/>
        <end position="158"/>
    </location>
</feature>
<feature type="transmembrane region" description="Helical" evidence="1">
    <location>
        <begin position="169"/>
        <end position="189"/>
    </location>
</feature>
<feature type="transmembrane region" description="Helical" evidence="1">
    <location>
        <begin position="199"/>
        <end position="219"/>
    </location>
</feature>
<feature type="transmembrane region" description="Helical" evidence="1">
    <location>
        <begin position="227"/>
        <end position="247"/>
    </location>
</feature>
<feature type="transmembrane region" description="Helical" evidence="1">
    <location>
        <begin position="265"/>
        <end position="285"/>
    </location>
</feature>
<feature type="transmembrane region" description="Helical" evidence="1">
    <location>
        <begin position="299"/>
        <end position="319"/>
    </location>
</feature>
<feature type="transmembrane region" description="Helical" evidence="1">
    <location>
        <begin position="348"/>
        <end position="368"/>
    </location>
</feature>
<feature type="transmembrane region" description="Helical" evidence="1">
    <location>
        <begin position="376"/>
        <end position="396"/>
    </location>
</feature>
<feature type="transmembrane region" description="Helical" evidence="1">
    <location>
        <begin position="405"/>
        <end position="425"/>
    </location>
</feature>
<feature type="transmembrane region" description="Helical" evidence="1">
    <location>
        <begin position="438"/>
        <end position="458"/>
    </location>
</feature>
<feature type="transmembrane region" description="Helical" evidence="1">
    <location>
        <begin position="470"/>
        <end position="490"/>
    </location>
</feature>
<feature type="transmembrane region" description="Helical" evidence="1">
    <location>
        <begin position="512"/>
        <end position="532"/>
    </location>
</feature>
<feature type="region of interest" description="Disordered" evidence="3">
    <location>
        <begin position="1"/>
        <end position="61"/>
    </location>
</feature>
<feature type="region of interest" description="Disordered" evidence="3">
    <location>
        <begin position="534"/>
        <end position="564"/>
    </location>
</feature>
<feature type="compositionally biased region" description="Polar residues" evidence="3">
    <location>
        <begin position="25"/>
        <end position="44"/>
    </location>
</feature>
<feature type="compositionally biased region" description="Basic and acidic residues" evidence="3">
    <location>
        <begin position="47"/>
        <end position="57"/>
    </location>
</feature>
<feature type="compositionally biased region" description="Basic and acidic residues" evidence="3">
    <location>
        <begin position="539"/>
        <end position="564"/>
    </location>
</feature>
<feature type="glycosylation site" description="N-linked (GlcNAc...) asparagine" evidence="2">
    <location>
        <position position="222"/>
    </location>
</feature>
<feature type="glycosylation site" description="N-linked (GlcNAc...) asparagine" evidence="2">
    <location>
        <position position="469"/>
    </location>
</feature>
<gene>
    <name evidence="5" type="primary">dmxR4</name>
</gene>